<reference key="1">
    <citation type="submission" date="2002-03" db="EMBL/GenBank/DDBJ databases">
        <title>Phylogeny of the North American pines.</title>
        <authorList>
            <person name="Geada Lopez G."/>
            <person name="Kamiya K."/>
            <person name="Harada K."/>
        </authorList>
    </citation>
    <scope>NUCLEOTIDE SEQUENCE [GENOMIC DNA]</scope>
    <source>
        <tissue>Leaf</tissue>
    </source>
</reference>
<accession>Q8HQS3</accession>
<evidence type="ECO:0000255" key="1">
    <source>
        <dbReference type="HAMAP-Rule" id="MF_01390"/>
    </source>
</evidence>
<dbReference type="EMBL" id="AB080944">
    <property type="protein sequence ID" value="BAC11947.1"/>
    <property type="molecule type" value="Genomic_DNA"/>
</dbReference>
<dbReference type="GO" id="GO:0009507">
    <property type="term" value="C:chloroplast"/>
    <property type="evidence" value="ECO:0007669"/>
    <property type="project" value="UniProtKB-SubCell"/>
</dbReference>
<dbReference type="GO" id="GO:0003723">
    <property type="term" value="F:RNA binding"/>
    <property type="evidence" value="ECO:0007669"/>
    <property type="project" value="UniProtKB-KW"/>
</dbReference>
<dbReference type="GO" id="GO:0006397">
    <property type="term" value="P:mRNA processing"/>
    <property type="evidence" value="ECO:0007669"/>
    <property type="project" value="UniProtKB-KW"/>
</dbReference>
<dbReference type="GO" id="GO:0008380">
    <property type="term" value="P:RNA splicing"/>
    <property type="evidence" value="ECO:0007669"/>
    <property type="project" value="UniProtKB-UniRule"/>
</dbReference>
<dbReference type="GO" id="GO:0008033">
    <property type="term" value="P:tRNA processing"/>
    <property type="evidence" value="ECO:0007669"/>
    <property type="project" value="UniProtKB-KW"/>
</dbReference>
<dbReference type="HAMAP" id="MF_01390">
    <property type="entry name" value="MatK"/>
    <property type="match status" value="1"/>
</dbReference>
<dbReference type="InterPro" id="IPR024937">
    <property type="entry name" value="Domain_X"/>
</dbReference>
<dbReference type="InterPro" id="IPR002866">
    <property type="entry name" value="Maturase_MatK"/>
</dbReference>
<dbReference type="InterPro" id="IPR024942">
    <property type="entry name" value="Maturase_MatK_N"/>
</dbReference>
<dbReference type="PANTHER" id="PTHR34811">
    <property type="entry name" value="MATURASE K"/>
    <property type="match status" value="1"/>
</dbReference>
<dbReference type="PANTHER" id="PTHR34811:SF1">
    <property type="entry name" value="MATURASE K"/>
    <property type="match status" value="1"/>
</dbReference>
<dbReference type="Pfam" id="PF01348">
    <property type="entry name" value="Intron_maturas2"/>
    <property type="match status" value="1"/>
</dbReference>
<dbReference type="Pfam" id="PF01824">
    <property type="entry name" value="MatK_N"/>
    <property type="match status" value="1"/>
</dbReference>
<sequence length="515" mass="61037">MDEFHRCGKEDSFWQQCFLYPLFFQEDLYAISHDHYLDVSSSSRPMEHLSSNDQLSFLTVKRLIGQIRQQNHSIVLFVNCDPNPLADRKKSFYSESVLEALTLVLEVPFSIWSKYSVEGMNESKSFRSIHSIFPFLEDKFPHSNSILDARIPYSIHPEILVRTFRRWIRDAPSLHPLRSVLYEYRNSPDNLQRSIIVVPRVNTRFFLFLWNYYVCECESILFSRLKRSSHSRSLTHGSFPQRTHFHRKIKHIIIFSRRNSLKSIWSLKDPKIHYVRYGERPIIAIKGAHLLVKKCRYYLLIFRQFYFHLWSEPYRVCSHQLSKNCSSSPGYFLRVRMNPILVRTKMLDELFIADLITDEIDPIVPIVPIIGLLATEKFCDISGRPISKLSWTSLTDDDILDRFDQIWRNLFHYYSGSFDRDGLYRIKYILSLSCAKTLACKHKSTIRVVRKELGPELFKKSFSKEREFYSLRFSSKAAARSQRERIWHSDISQINPLANSWQKIQDLKIENLFDQ</sequence>
<name>MATK_PINPT</name>
<proteinExistence type="inferred from homology"/>
<geneLocation type="chloroplast"/>
<protein>
    <recommendedName>
        <fullName evidence="1">Maturase K</fullName>
    </recommendedName>
    <alternativeName>
        <fullName evidence="1">Intron maturase</fullName>
    </alternativeName>
</protein>
<comment type="function">
    <text evidence="1">Usually encoded in the trnK tRNA gene intron. Probably assists in splicing its own and other chloroplast group II introns.</text>
</comment>
<comment type="subcellular location">
    <subcellularLocation>
        <location>Plastid</location>
        <location>Chloroplast</location>
    </subcellularLocation>
</comment>
<comment type="similarity">
    <text evidence="1">Belongs to the intron maturase 2 family. MatK subfamily.</text>
</comment>
<feature type="chain" id="PRO_0000143621" description="Maturase K">
    <location>
        <begin position="1"/>
        <end position="515"/>
    </location>
</feature>
<keyword id="KW-0150">Chloroplast</keyword>
<keyword id="KW-0507">mRNA processing</keyword>
<keyword id="KW-0934">Plastid</keyword>
<keyword id="KW-0694">RNA-binding</keyword>
<keyword id="KW-0819">tRNA processing</keyword>
<organism>
    <name type="scientific">Pinus patula</name>
    <name type="common">Mexican weeping pine</name>
    <dbReference type="NCBI Taxonomy" id="71645"/>
    <lineage>
        <taxon>Eukaryota</taxon>
        <taxon>Viridiplantae</taxon>
        <taxon>Streptophyta</taxon>
        <taxon>Embryophyta</taxon>
        <taxon>Tracheophyta</taxon>
        <taxon>Spermatophyta</taxon>
        <taxon>Pinopsida</taxon>
        <taxon>Pinidae</taxon>
        <taxon>Conifers I</taxon>
        <taxon>Pinales</taxon>
        <taxon>Pinaceae</taxon>
        <taxon>Pinus</taxon>
        <taxon>Pinus subgen. Pinus</taxon>
    </lineage>
</organism>
<gene>
    <name evidence="1" type="primary">matK</name>
</gene>